<reference key="1">
    <citation type="journal article" date="2010" name="Genome Biol.">
        <title>Structure and dynamics of the pan-genome of Streptococcus pneumoniae and closely related species.</title>
        <authorList>
            <person name="Donati C."/>
            <person name="Hiller N.L."/>
            <person name="Tettelin H."/>
            <person name="Muzzi A."/>
            <person name="Croucher N.J."/>
            <person name="Angiuoli S.V."/>
            <person name="Oggioni M."/>
            <person name="Dunning Hotopp J.C."/>
            <person name="Hu F.Z."/>
            <person name="Riley D.R."/>
            <person name="Covacci A."/>
            <person name="Mitchell T.J."/>
            <person name="Bentley S.D."/>
            <person name="Kilian M."/>
            <person name="Ehrlich G.D."/>
            <person name="Rappuoli R."/>
            <person name="Moxon E.R."/>
            <person name="Masignani V."/>
        </authorList>
    </citation>
    <scope>NUCLEOTIDE SEQUENCE [LARGE SCALE GENOMIC DNA]</scope>
    <source>
        <strain>JJA</strain>
    </source>
</reference>
<keyword id="KW-0028">Amino-acid biosynthesis</keyword>
<keyword id="KW-0963">Cytoplasm</keyword>
<keyword id="KW-0554">One-carbon metabolism</keyword>
<keyword id="KW-0663">Pyridoxal phosphate</keyword>
<keyword id="KW-0808">Transferase</keyword>
<name>GLYA_STRZJ</name>
<gene>
    <name evidence="1" type="primary">glyA</name>
    <name type="ordered locus">SPJ_0963</name>
</gene>
<dbReference type="EC" id="2.1.2.1" evidence="1"/>
<dbReference type="EMBL" id="CP000919">
    <property type="protein sequence ID" value="ACO18345.1"/>
    <property type="molecule type" value="Genomic_DNA"/>
</dbReference>
<dbReference type="RefSeq" id="WP_000575519.1">
    <property type="nucleotide sequence ID" value="NC_012466.1"/>
</dbReference>
<dbReference type="SMR" id="C1CE16"/>
<dbReference type="KEGG" id="sjj:SPJ_0963"/>
<dbReference type="HOGENOM" id="CLU_022477_2_1_9"/>
<dbReference type="UniPathway" id="UPA00193"/>
<dbReference type="UniPathway" id="UPA00288">
    <property type="reaction ID" value="UER01023"/>
</dbReference>
<dbReference type="Proteomes" id="UP000002206">
    <property type="component" value="Chromosome"/>
</dbReference>
<dbReference type="GO" id="GO:0005829">
    <property type="term" value="C:cytosol"/>
    <property type="evidence" value="ECO:0007669"/>
    <property type="project" value="TreeGrafter"/>
</dbReference>
<dbReference type="GO" id="GO:0004372">
    <property type="term" value="F:glycine hydroxymethyltransferase activity"/>
    <property type="evidence" value="ECO:0007669"/>
    <property type="project" value="UniProtKB-UniRule"/>
</dbReference>
<dbReference type="GO" id="GO:0030170">
    <property type="term" value="F:pyridoxal phosphate binding"/>
    <property type="evidence" value="ECO:0007669"/>
    <property type="project" value="UniProtKB-UniRule"/>
</dbReference>
<dbReference type="GO" id="GO:0019264">
    <property type="term" value="P:glycine biosynthetic process from serine"/>
    <property type="evidence" value="ECO:0007669"/>
    <property type="project" value="UniProtKB-UniRule"/>
</dbReference>
<dbReference type="GO" id="GO:0035999">
    <property type="term" value="P:tetrahydrofolate interconversion"/>
    <property type="evidence" value="ECO:0007669"/>
    <property type="project" value="UniProtKB-UniRule"/>
</dbReference>
<dbReference type="CDD" id="cd00378">
    <property type="entry name" value="SHMT"/>
    <property type="match status" value="1"/>
</dbReference>
<dbReference type="FunFam" id="3.40.640.10:FF:000001">
    <property type="entry name" value="Serine hydroxymethyltransferase"/>
    <property type="match status" value="1"/>
</dbReference>
<dbReference type="FunFam" id="3.90.1150.10:FF:000072">
    <property type="entry name" value="Serine hydroxymethyltransferase"/>
    <property type="match status" value="1"/>
</dbReference>
<dbReference type="Gene3D" id="3.90.1150.10">
    <property type="entry name" value="Aspartate Aminotransferase, domain 1"/>
    <property type="match status" value="1"/>
</dbReference>
<dbReference type="Gene3D" id="3.40.640.10">
    <property type="entry name" value="Type I PLP-dependent aspartate aminotransferase-like (Major domain)"/>
    <property type="match status" value="1"/>
</dbReference>
<dbReference type="HAMAP" id="MF_00051">
    <property type="entry name" value="SHMT"/>
    <property type="match status" value="1"/>
</dbReference>
<dbReference type="InterPro" id="IPR015424">
    <property type="entry name" value="PyrdxlP-dep_Trfase"/>
</dbReference>
<dbReference type="InterPro" id="IPR015421">
    <property type="entry name" value="PyrdxlP-dep_Trfase_major"/>
</dbReference>
<dbReference type="InterPro" id="IPR015422">
    <property type="entry name" value="PyrdxlP-dep_Trfase_small"/>
</dbReference>
<dbReference type="InterPro" id="IPR001085">
    <property type="entry name" value="Ser_HO-MeTrfase"/>
</dbReference>
<dbReference type="InterPro" id="IPR049943">
    <property type="entry name" value="Ser_HO-MeTrfase-like"/>
</dbReference>
<dbReference type="InterPro" id="IPR019798">
    <property type="entry name" value="Ser_HO-MeTrfase_PLP_BS"/>
</dbReference>
<dbReference type="InterPro" id="IPR039429">
    <property type="entry name" value="SHMT-like_dom"/>
</dbReference>
<dbReference type="NCBIfam" id="NF000586">
    <property type="entry name" value="PRK00011.1"/>
    <property type="match status" value="1"/>
</dbReference>
<dbReference type="PANTHER" id="PTHR11680">
    <property type="entry name" value="SERINE HYDROXYMETHYLTRANSFERASE"/>
    <property type="match status" value="1"/>
</dbReference>
<dbReference type="PANTHER" id="PTHR11680:SF35">
    <property type="entry name" value="SERINE HYDROXYMETHYLTRANSFERASE 1"/>
    <property type="match status" value="1"/>
</dbReference>
<dbReference type="Pfam" id="PF00464">
    <property type="entry name" value="SHMT"/>
    <property type="match status" value="1"/>
</dbReference>
<dbReference type="PIRSF" id="PIRSF000412">
    <property type="entry name" value="SHMT"/>
    <property type="match status" value="1"/>
</dbReference>
<dbReference type="SUPFAM" id="SSF53383">
    <property type="entry name" value="PLP-dependent transferases"/>
    <property type="match status" value="1"/>
</dbReference>
<dbReference type="PROSITE" id="PS00096">
    <property type="entry name" value="SHMT"/>
    <property type="match status" value="1"/>
</dbReference>
<sequence>MIFDKDDFKAYDADLWNAIAKEEERQQNNIELIASENVVSKAVMAAQGSILTNKYAEGYPGRRYYGGTDVVDVVETLAIERAKEIFGAKFANVQPHSGSQANCAAYMSLIEPGDTVMGMDLASGGHLTHGAPVSFSGQTYNFVSYSVDPETELLDFDAILKQAQEVKPKLIVAGASAYSQIIDFSKFREIADAVGAKLMVDMAHIAGLVAAGLHPSPVPYAHITTTTTHKTLRGPRGGLILTNDEELAKKINSAIFPGIQGGPLEHVVAAKAVSFKEVLDPAFKEYAANVIKNSKAMADVFLQDPDFRIISGGTENHLFLVDVTKVVENGKVAQNLLDEVNITLNKNSIPYESLSPFKTSGIRIGAAAITARGFGEEESRKVAELIIKTLKNSENEAVLEEVRSAVKELTDAFLLYED</sequence>
<evidence type="ECO:0000255" key="1">
    <source>
        <dbReference type="HAMAP-Rule" id="MF_00051"/>
    </source>
</evidence>
<accession>C1CE16</accession>
<organism>
    <name type="scientific">Streptococcus pneumoniae (strain JJA)</name>
    <dbReference type="NCBI Taxonomy" id="488222"/>
    <lineage>
        <taxon>Bacteria</taxon>
        <taxon>Bacillati</taxon>
        <taxon>Bacillota</taxon>
        <taxon>Bacilli</taxon>
        <taxon>Lactobacillales</taxon>
        <taxon>Streptococcaceae</taxon>
        <taxon>Streptococcus</taxon>
    </lineage>
</organism>
<protein>
    <recommendedName>
        <fullName evidence="1">Serine hydroxymethyltransferase</fullName>
        <shortName evidence="1">SHMT</shortName>
        <shortName evidence="1">Serine methylase</shortName>
        <ecNumber evidence="1">2.1.2.1</ecNumber>
    </recommendedName>
</protein>
<proteinExistence type="inferred from homology"/>
<feature type="chain" id="PRO_1000117653" description="Serine hydroxymethyltransferase">
    <location>
        <begin position="1"/>
        <end position="418"/>
    </location>
</feature>
<feature type="binding site" evidence="1">
    <location>
        <position position="121"/>
    </location>
    <ligand>
        <name>(6S)-5,6,7,8-tetrahydrofolate</name>
        <dbReference type="ChEBI" id="CHEBI:57453"/>
    </ligand>
</feature>
<feature type="binding site" evidence="1">
    <location>
        <begin position="125"/>
        <end position="127"/>
    </location>
    <ligand>
        <name>(6S)-5,6,7,8-tetrahydrofolate</name>
        <dbReference type="ChEBI" id="CHEBI:57453"/>
    </ligand>
</feature>
<feature type="binding site" evidence="1">
    <location>
        <position position="246"/>
    </location>
    <ligand>
        <name>(6S)-5,6,7,8-tetrahydrofolate</name>
        <dbReference type="ChEBI" id="CHEBI:57453"/>
    </ligand>
</feature>
<feature type="binding site" evidence="1">
    <location>
        <begin position="355"/>
        <end position="357"/>
    </location>
    <ligand>
        <name>(6S)-5,6,7,8-tetrahydrofolate</name>
        <dbReference type="ChEBI" id="CHEBI:57453"/>
    </ligand>
</feature>
<feature type="site" description="Plays an important role in substrate specificity" evidence="1">
    <location>
        <position position="229"/>
    </location>
</feature>
<feature type="modified residue" description="N6-(pyridoxal phosphate)lysine" evidence="1">
    <location>
        <position position="230"/>
    </location>
</feature>
<comment type="function">
    <text evidence="1">Catalyzes the reversible interconversion of serine and glycine with tetrahydrofolate (THF) serving as the one-carbon carrier. This reaction serves as the major source of one-carbon groups required for the biosynthesis of purines, thymidylate, methionine, and other important biomolecules. Also exhibits THF-independent aldolase activity toward beta-hydroxyamino acids, producing glycine and aldehydes, via a retro-aldol mechanism.</text>
</comment>
<comment type="catalytic activity">
    <reaction evidence="1">
        <text>(6R)-5,10-methylene-5,6,7,8-tetrahydrofolate + glycine + H2O = (6S)-5,6,7,8-tetrahydrofolate + L-serine</text>
        <dbReference type="Rhea" id="RHEA:15481"/>
        <dbReference type="ChEBI" id="CHEBI:15377"/>
        <dbReference type="ChEBI" id="CHEBI:15636"/>
        <dbReference type="ChEBI" id="CHEBI:33384"/>
        <dbReference type="ChEBI" id="CHEBI:57305"/>
        <dbReference type="ChEBI" id="CHEBI:57453"/>
        <dbReference type="EC" id="2.1.2.1"/>
    </reaction>
</comment>
<comment type="cofactor">
    <cofactor evidence="1">
        <name>pyridoxal 5'-phosphate</name>
        <dbReference type="ChEBI" id="CHEBI:597326"/>
    </cofactor>
</comment>
<comment type="pathway">
    <text evidence="1">One-carbon metabolism; tetrahydrofolate interconversion.</text>
</comment>
<comment type="pathway">
    <text evidence="1">Amino-acid biosynthesis; glycine biosynthesis; glycine from L-serine: step 1/1.</text>
</comment>
<comment type="subunit">
    <text evidence="1">Homodimer.</text>
</comment>
<comment type="subcellular location">
    <subcellularLocation>
        <location evidence="1">Cytoplasm</location>
    </subcellularLocation>
</comment>
<comment type="similarity">
    <text evidence="1">Belongs to the SHMT family.</text>
</comment>